<organism>
    <name type="scientific">Bacillus cereus (strain ATCC 14579 / DSM 31 / CCUG 7414 / JCM 2152 / NBRC 15305 / NCIMB 9373 / NCTC 2599 / NRRL B-3711)</name>
    <dbReference type="NCBI Taxonomy" id="226900"/>
    <lineage>
        <taxon>Bacteria</taxon>
        <taxon>Bacillati</taxon>
        <taxon>Bacillota</taxon>
        <taxon>Bacilli</taxon>
        <taxon>Bacillales</taxon>
        <taxon>Bacillaceae</taxon>
        <taxon>Bacillus</taxon>
        <taxon>Bacillus cereus group</taxon>
    </lineage>
</organism>
<dbReference type="EC" id="7.3.2.1" evidence="1"/>
<dbReference type="EMBL" id="AE016877">
    <property type="protein sequence ID" value="AAP11181.1"/>
    <property type="molecule type" value="Genomic_DNA"/>
</dbReference>
<dbReference type="RefSeq" id="NP_833980.1">
    <property type="nucleotide sequence ID" value="NC_004722.1"/>
</dbReference>
<dbReference type="RefSeq" id="WP_000226686.1">
    <property type="nucleotide sequence ID" value="NZ_CP138336.1"/>
</dbReference>
<dbReference type="SMR" id="Q818I7"/>
<dbReference type="STRING" id="226900.BC_4266"/>
<dbReference type="KEGG" id="bce:BC4266"/>
<dbReference type="PATRIC" id="fig|226900.8.peg.4410"/>
<dbReference type="HOGENOM" id="CLU_000604_1_22_9"/>
<dbReference type="OrthoDB" id="9802185at2"/>
<dbReference type="Proteomes" id="UP000001417">
    <property type="component" value="Chromosome"/>
</dbReference>
<dbReference type="GO" id="GO:0005886">
    <property type="term" value="C:plasma membrane"/>
    <property type="evidence" value="ECO:0007669"/>
    <property type="project" value="UniProtKB-SubCell"/>
</dbReference>
<dbReference type="GO" id="GO:0005524">
    <property type="term" value="F:ATP binding"/>
    <property type="evidence" value="ECO:0007669"/>
    <property type="project" value="UniProtKB-KW"/>
</dbReference>
<dbReference type="GO" id="GO:0016887">
    <property type="term" value="F:ATP hydrolysis activity"/>
    <property type="evidence" value="ECO:0007669"/>
    <property type="project" value="InterPro"/>
</dbReference>
<dbReference type="GO" id="GO:0015415">
    <property type="term" value="F:ATPase-coupled phosphate ion transmembrane transporter activity"/>
    <property type="evidence" value="ECO:0007669"/>
    <property type="project" value="UniProtKB-EC"/>
</dbReference>
<dbReference type="GO" id="GO:0035435">
    <property type="term" value="P:phosphate ion transmembrane transport"/>
    <property type="evidence" value="ECO:0007669"/>
    <property type="project" value="InterPro"/>
</dbReference>
<dbReference type="CDD" id="cd03260">
    <property type="entry name" value="ABC_PstB_phosphate_transporter"/>
    <property type="match status" value="1"/>
</dbReference>
<dbReference type="FunFam" id="3.40.50.300:FF:000132">
    <property type="entry name" value="Phosphate import ATP-binding protein PstB"/>
    <property type="match status" value="1"/>
</dbReference>
<dbReference type="Gene3D" id="3.40.50.300">
    <property type="entry name" value="P-loop containing nucleotide triphosphate hydrolases"/>
    <property type="match status" value="1"/>
</dbReference>
<dbReference type="InterPro" id="IPR003593">
    <property type="entry name" value="AAA+_ATPase"/>
</dbReference>
<dbReference type="InterPro" id="IPR003439">
    <property type="entry name" value="ABC_transporter-like_ATP-bd"/>
</dbReference>
<dbReference type="InterPro" id="IPR017871">
    <property type="entry name" value="ABC_transporter-like_CS"/>
</dbReference>
<dbReference type="InterPro" id="IPR027417">
    <property type="entry name" value="P-loop_NTPase"/>
</dbReference>
<dbReference type="InterPro" id="IPR005670">
    <property type="entry name" value="PstB-like"/>
</dbReference>
<dbReference type="NCBIfam" id="TIGR00972">
    <property type="entry name" value="3a0107s01c2"/>
    <property type="match status" value="1"/>
</dbReference>
<dbReference type="PANTHER" id="PTHR43423">
    <property type="entry name" value="ABC TRANSPORTER I FAMILY MEMBER 17"/>
    <property type="match status" value="1"/>
</dbReference>
<dbReference type="PANTHER" id="PTHR43423:SF1">
    <property type="entry name" value="ABC TRANSPORTER I FAMILY MEMBER 17"/>
    <property type="match status" value="1"/>
</dbReference>
<dbReference type="Pfam" id="PF00005">
    <property type="entry name" value="ABC_tran"/>
    <property type="match status" value="1"/>
</dbReference>
<dbReference type="SMART" id="SM00382">
    <property type="entry name" value="AAA"/>
    <property type="match status" value="1"/>
</dbReference>
<dbReference type="SUPFAM" id="SSF52540">
    <property type="entry name" value="P-loop containing nucleoside triphosphate hydrolases"/>
    <property type="match status" value="1"/>
</dbReference>
<dbReference type="PROSITE" id="PS00211">
    <property type="entry name" value="ABC_TRANSPORTER_1"/>
    <property type="match status" value="1"/>
</dbReference>
<dbReference type="PROSITE" id="PS50893">
    <property type="entry name" value="ABC_TRANSPORTER_2"/>
    <property type="match status" value="1"/>
</dbReference>
<dbReference type="PROSITE" id="PS51238">
    <property type="entry name" value="PSTB"/>
    <property type="match status" value="1"/>
</dbReference>
<protein>
    <recommendedName>
        <fullName evidence="1">Phosphate import ATP-binding protein PstB</fullName>
        <ecNumber evidence="1">7.3.2.1</ecNumber>
    </recommendedName>
    <alternativeName>
        <fullName evidence="1">ABC phosphate transporter</fullName>
    </alternativeName>
    <alternativeName>
        <fullName evidence="1">Phosphate-transporting ATPase</fullName>
    </alternativeName>
</protein>
<evidence type="ECO:0000255" key="1">
    <source>
        <dbReference type="HAMAP-Rule" id="MF_01702"/>
    </source>
</evidence>
<proteinExistence type="inferred from homology"/>
<comment type="function">
    <text evidence="1">Part of the ABC transporter complex PstSACB involved in phosphate import. Responsible for energy coupling to the transport system.</text>
</comment>
<comment type="catalytic activity">
    <reaction evidence="1">
        <text>phosphate(out) + ATP + H2O = ADP + 2 phosphate(in) + H(+)</text>
        <dbReference type="Rhea" id="RHEA:24440"/>
        <dbReference type="ChEBI" id="CHEBI:15377"/>
        <dbReference type="ChEBI" id="CHEBI:15378"/>
        <dbReference type="ChEBI" id="CHEBI:30616"/>
        <dbReference type="ChEBI" id="CHEBI:43474"/>
        <dbReference type="ChEBI" id="CHEBI:456216"/>
        <dbReference type="EC" id="7.3.2.1"/>
    </reaction>
</comment>
<comment type="subunit">
    <text evidence="1">The complex is composed of two ATP-binding proteins (PstB), two transmembrane proteins (PstC and PstA) and a solute-binding protein (PstS).</text>
</comment>
<comment type="subcellular location">
    <subcellularLocation>
        <location evidence="1">Cell membrane</location>
        <topology evidence="1">Peripheral membrane protein</topology>
    </subcellularLocation>
</comment>
<comment type="similarity">
    <text evidence="1">Belongs to the ABC transporter superfamily. Phosphate importer (TC 3.A.1.7) family.</text>
</comment>
<gene>
    <name evidence="1" type="primary">pstB</name>
    <name type="ordered locus">BC_4266</name>
</gene>
<keyword id="KW-0067">ATP-binding</keyword>
<keyword id="KW-1003">Cell membrane</keyword>
<keyword id="KW-0472">Membrane</keyword>
<keyword id="KW-0547">Nucleotide-binding</keyword>
<keyword id="KW-0592">Phosphate transport</keyword>
<keyword id="KW-1185">Reference proteome</keyword>
<keyword id="KW-1278">Translocase</keyword>
<keyword id="KW-0813">Transport</keyword>
<name>PSTB_BACCR</name>
<feature type="chain" id="PRO_0000092773" description="Phosphate import ATP-binding protein PstB">
    <location>
        <begin position="1"/>
        <end position="271"/>
    </location>
</feature>
<feature type="domain" description="ABC transporter" evidence="1">
    <location>
        <begin position="25"/>
        <end position="266"/>
    </location>
</feature>
<feature type="binding site" evidence="1">
    <location>
        <begin position="57"/>
        <end position="64"/>
    </location>
    <ligand>
        <name>ATP</name>
        <dbReference type="ChEBI" id="CHEBI:30616"/>
    </ligand>
</feature>
<reference key="1">
    <citation type="journal article" date="2003" name="Nature">
        <title>Genome sequence of Bacillus cereus and comparative analysis with Bacillus anthracis.</title>
        <authorList>
            <person name="Ivanova N."/>
            <person name="Sorokin A."/>
            <person name="Anderson I."/>
            <person name="Galleron N."/>
            <person name="Candelon B."/>
            <person name="Kapatral V."/>
            <person name="Bhattacharyya A."/>
            <person name="Reznik G."/>
            <person name="Mikhailova N."/>
            <person name="Lapidus A."/>
            <person name="Chu L."/>
            <person name="Mazur M."/>
            <person name="Goltsman E."/>
            <person name="Larsen N."/>
            <person name="D'Souza M."/>
            <person name="Walunas T."/>
            <person name="Grechkin Y."/>
            <person name="Pusch G."/>
            <person name="Haselkorn R."/>
            <person name="Fonstein M."/>
            <person name="Ehrlich S.D."/>
            <person name="Overbeek R."/>
            <person name="Kyrpides N.C."/>
        </authorList>
    </citation>
    <scope>NUCLEOTIDE SEQUENCE [LARGE SCALE GENOMIC DNA]</scope>
    <source>
        <strain>ATCC 14579 / DSM 31 / CCUG 7414 / JCM 2152 / NBRC 15305 / NCIMB 9373 / NCTC 2599 / NRRL B-3711</strain>
    </source>
</reference>
<sequence>MVATVVNVQVKNEEKIETAPKKVVFDTKNLNLWYGEDHALKDINLSIHENEVTAIIGPSGCGKSTYLKTLNRMVELVPIVRTTGVIEYRERNIFDKSYPVEELRTHVGMVFQKPNPFPKSIYENVTYGPKIHGIRDKKTLDEIVEKSLRGAAIWDELKDRLHDNAYGLSGGQQQRLCIARCLAIEPDVILMDEPTSALDPISTLKVEELIQELKKDFSIVIVTHNMQQAARISDKTAFFLSGEVVEYTDTNKLFTTPSDKRTEDYITGRFG</sequence>
<accession>Q818I7</accession>